<accession>O84035</accession>
<sequence>MESSRILITSALPYANGPLHFGHITGAYLPADVYARFQRLQGKEVLYICGSDEYGIAITLNAELAGMGYQEYVDMYHKLHKDTFKKLGISVDFFSRTTNTYHPAIVQDFYRNLQERGLVENQVTEQLYSEEEGKFLADRYVVGTCPKCGFDRARGDECQQCGADYEARDLKEPRSKLTGAALSLRDTEHAYLHLERMKEDLLAFVQGIYLRPHMRNFVTDYIEHLRPRAVTRDLSWGIPVPDLENKVFYVWFDAPIGYISGTMDWAASIGDPEAWKKFWLDDTVTYAQFIGKDNTSFHAAIFPAMEIGQSLPYKKVDALVTSEFLLLEGFQFSKSDGNFIDMDAFLETYSLDKLRYVLAAIAPETSDSEFSFQEFKTRCNSELVGKYGNFVNRVLAFAVKNGCTELSSPQLEQKDLDFISKSQKLAKDAAEHYAQYSLRKACSTIMELAALGNGYFNDEAPWKLAKEGNWNRVRAILFCACYCQKLLALISYPIMPETALKILEMIAPHSLDLGSQDPDRLQSLWTDSFFDYSEEKFSLKEPELLFTMVE</sequence>
<comment type="function">
    <text evidence="1">Is required not only for elongation of protein synthesis but also for the initiation of all mRNA translation through initiator tRNA(fMet) aminoacylation.</text>
</comment>
<comment type="catalytic activity">
    <reaction>
        <text>tRNA(Met) + L-methionine + ATP = L-methionyl-tRNA(Met) + AMP + diphosphate</text>
        <dbReference type="Rhea" id="RHEA:13481"/>
        <dbReference type="Rhea" id="RHEA-COMP:9667"/>
        <dbReference type="Rhea" id="RHEA-COMP:9698"/>
        <dbReference type="ChEBI" id="CHEBI:30616"/>
        <dbReference type="ChEBI" id="CHEBI:33019"/>
        <dbReference type="ChEBI" id="CHEBI:57844"/>
        <dbReference type="ChEBI" id="CHEBI:78442"/>
        <dbReference type="ChEBI" id="CHEBI:78530"/>
        <dbReference type="ChEBI" id="CHEBI:456215"/>
        <dbReference type="EC" id="6.1.1.10"/>
    </reaction>
</comment>
<comment type="cofactor">
    <cofactor evidence="1">
        <name>Zn(2+)</name>
        <dbReference type="ChEBI" id="CHEBI:29105"/>
    </cofactor>
    <text evidence="1">Binds 1 zinc ion per subunit.</text>
</comment>
<comment type="subunit">
    <text evidence="1">Monomer.</text>
</comment>
<comment type="subcellular location">
    <subcellularLocation>
        <location evidence="1">Cytoplasm</location>
    </subcellularLocation>
</comment>
<comment type="similarity">
    <text evidence="2">Belongs to the class-I aminoacyl-tRNA synthetase family. MetG type 1 subfamily.</text>
</comment>
<name>SYM_CHLTR</name>
<organism>
    <name type="scientific">Chlamydia trachomatis serovar D (strain ATCC VR-885 / DSM 19411 / UW-3/Cx)</name>
    <dbReference type="NCBI Taxonomy" id="272561"/>
    <lineage>
        <taxon>Bacteria</taxon>
        <taxon>Pseudomonadati</taxon>
        <taxon>Chlamydiota</taxon>
        <taxon>Chlamydiia</taxon>
        <taxon>Chlamydiales</taxon>
        <taxon>Chlamydiaceae</taxon>
        <taxon>Chlamydia/Chlamydophila group</taxon>
        <taxon>Chlamydia</taxon>
    </lineage>
</organism>
<dbReference type="EC" id="6.1.1.10"/>
<dbReference type="EMBL" id="AE001273">
    <property type="protein sequence ID" value="AAC67622.1"/>
    <property type="molecule type" value="Genomic_DNA"/>
</dbReference>
<dbReference type="PIR" id="C71567">
    <property type="entry name" value="C71567"/>
</dbReference>
<dbReference type="RefSeq" id="NP_219534.1">
    <property type="nucleotide sequence ID" value="NC_000117.1"/>
</dbReference>
<dbReference type="RefSeq" id="WP_010724990.1">
    <property type="nucleotide sequence ID" value="NC_000117.1"/>
</dbReference>
<dbReference type="SMR" id="O84035"/>
<dbReference type="FunCoup" id="O84035">
    <property type="interactions" value="235"/>
</dbReference>
<dbReference type="STRING" id="272561.CT_032"/>
<dbReference type="EnsemblBacteria" id="AAC67622">
    <property type="protein sequence ID" value="AAC67622"/>
    <property type="gene ID" value="CT_032"/>
</dbReference>
<dbReference type="GeneID" id="884148"/>
<dbReference type="KEGG" id="ctr:CT_032"/>
<dbReference type="PATRIC" id="fig|272561.5.peg.37"/>
<dbReference type="HOGENOM" id="CLU_009710_1_2_0"/>
<dbReference type="InParanoid" id="O84035"/>
<dbReference type="OrthoDB" id="9810191at2"/>
<dbReference type="Proteomes" id="UP000000431">
    <property type="component" value="Chromosome"/>
</dbReference>
<dbReference type="GO" id="GO:0005829">
    <property type="term" value="C:cytosol"/>
    <property type="evidence" value="ECO:0000318"/>
    <property type="project" value="GO_Central"/>
</dbReference>
<dbReference type="GO" id="GO:0005524">
    <property type="term" value="F:ATP binding"/>
    <property type="evidence" value="ECO:0007669"/>
    <property type="project" value="UniProtKB-UniRule"/>
</dbReference>
<dbReference type="GO" id="GO:0046872">
    <property type="term" value="F:metal ion binding"/>
    <property type="evidence" value="ECO:0007669"/>
    <property type="project" value="UniProtKB-KW"/>
</dbReference>
<dbReference type="GO" id="GO:0004825">
    <property type="term" value="F:methionine-tRNA ligase activity"/>
    <property type="evidence" value="ECO:0000318"/>
    <property type="project" value="GO_Central"/>
</dbReference>
<dbReference type="GO" id="GO:0006431">
    <property type="term" value="P:methionyl-tRNA aminoacylation"/>
    <property type="evidence" value="ECO:0000318"/>
    <property type="project" value="GO_Central"/>
</dbReference>
<dbReference type="CDD" id="cd07957">
    <property type="entry name" value="Anticodon_Ia_Met"/>
    <property type="match status" value="1"/>
</dbReference>
<dbReference type="CDD" id="cd00814">
    <property type="entry name" value="MetRS_core"/>
    <property type="match status" value="1"/>
</dbReference>
<dbReference type="FunFam" id="2.20.28.20:FF:000001">
    <property type="entry name" value="Methionine--tRNA ligase"/>
    <property type="match status" value="1"/>
</dbReference>
<dbReference type="Gene3D" id="3.40.50.620">
    <property type="entry name" value="HUPs"/>
    <property type="match status" value="1"/>
</dbReference>
<dbReference type="Gene3D" id="1.10.730.10">
    <property type="entry name" value="Isoleucyl-tRNA Synthetase, Domain 1"/>
    <property type="match status" value="1"/>
</dbReference>
<dbReference type="Gene3D" id="2.20.28.20">
    <property type="entry name" value="Methionyl-tRNA synthetase, Zn-domain"/>
    <property type="match status" value="1"/>
</dbReference>
<dbReference type="HAMAP" id="MF_00098">
    <property type="entry name" value="Met_tRNA_synth_type1"/>
    <property type="match status" value="1"/>
</dbReference>
<dbReference type="InterPro" id="IPR041872">
    <property type="entry name" value="Anticodon_Met"/>
</dbReference>
<dbReference type="InterPro" id="IPR023458">
    <property type="entry name" value="Met-tRNA_ligase_1"/>
</dbReference>
<dbReference type="InterPro" id="IPR014758">
    <property type="entry name" value="Met-tRNA_synth"/>
</dbReference>
<dbReference type="InterPro" id="IPR015413">
    <property type="entry name" value="Methionyl/Leucyl_tRNA_Synth"/>
</dbReference>
<dbReference type="InterPro" id="IPR033911">
    <property type="entry name" value="MetRS_core"/>
</dbReference>
<dbReference type="InterPro" id="IPR029038">
    <property type="entry name" value="MetRS_Zn"/>
</dbReference>
<dbReference type="InterPro" id="IPR014729">
    <property type="entry name" value="Rossmann-like_a/b/a_fold"/>
</dbReference>
<dbReference type="InterPro" id="IPR009080">
    <property type="entry name" value="tRNAsynth_Ia_anticodon-bd"/>
</dbReference>
<dbReference type="NCBIfam" id="TIGR00398">
    <property type="entry name" value="metG"/>
    <property type="match status" value="1"/>
</dbReference>
<dbReference type="PANTHER" id="PTHR45765">
    <property type="entry name" value="METHIONINE--TRNA LIGASE"/>
    <property type="match status" value="1"/>
</dbReference>
<dbReference type="PANTHER" id="PTHR45765:SF1">
    <property type="entry name" value="METHIONINE--TRNA LIGASE, CYTOPLASMIC"/>
    <property type="match status" value="1"/>
</dbReference>
<dbReference type="Pfam" id="PF19303">
    <property type="entry name" value="Anticodon_3"/>
    <property type="match status" value="1"/>
</dbReference>
<dbReference type="Pfam" id="PF09334">
    <property type="entry name" value="tRNA-synt_1g"/>
    <property type="match status" value="1"/>
</dbReference>
<dbReference type="PRINTS" id="PR01041">
    <property type="entry name" value="TRNASYNTHMET"/>
</dbReference>
<dbReference type="SUPFAM" id="SSF47323">
    <property type="entry name" value="Anticodon-binding domain of a subclass of class I aminoacyl-tRNA synthetases"/>
    <property type="match status" value="1"/>
</dbReference>
<dbReference type="SUPFAM" id="SSF57770">
    <property type="entry name" value="Methionyl-tRNA synthetase (MetRS), Zn-domain"/>
    <property type="match status" value="1"/>
</dbReference>
<dbReference type="SUPFAM" id="SSF52374">
    <property type="entry name" value="Nucleotidylyl transferase"/>
    <property type="match status" value="1"/>
</dbReference>
<proteinExistence type="inferred from homology"/>
<protein>
    <recommendedName>
        <fullName>Methionine--tRNA ligase</fullName>
        <ecNumber>6.1.1.10</ecNumber>
    </recommendedName>
    <alternativeName>
        <fullName>Methionyl-tRNA synthetase</fullName>
        <shortName>MetRS</shortName>
    </alternativeName>
</protein>
<feature type="chain" id="PRO_0000139123" description="Methionine--tRNA ligase">
    <location>
        <begin position="1"/>
        <end position="550"/>
    </location>
</feature>
<feature type="short sequence motif" description="'HIGH' region">
    <location>
        <begin position="13"/>
        <end position="23"/>
    </location>
</feature>
<feature type="short sequence motif" description="'KMSKS' region">
    <location>
        <begin position="331"/>
        <end position="335"/>
    </location>
</feature>
<feature type="binding site" evidence="1">
    <location>
        <position position="145"/>
    </location>
    <ligand>
        <name>Zn(2+)</name>
        <dbReference type="ChEBI" id="CHEBI:29105"/>
    </ligand>
</feature>
<feature type="binding site" evidence="1">
    <location>
        <position position="148"/>
    </location>
    <ligand>
        <name>Zn(2+)</name>
        <dbReference type="ChEBI" id="CHEBI:29105"/>
    </ligand>
</feature>
<feature type="binding site" evidence="1">
    <location>
        <position position="158"/>
    </location>
    <ligand>
        <name>Zn(2+)</name>
        <dbReference type="ChEBI" id="CHEBI:29105"/>
    </ligand>
</feature>
<feature type="binding site" evidence="1">
    <location>
        <position position="161"/>
    </location>
    <ligand>
        <name>Zn(2+)</name>
        <dbReference type="ChEBI" id="CHEBI:29105"/>
    </ligand>
</feature>
<feature type="binding site" evidence="1">
    <location>
        <position position="334"/>
    </location>
    <ligand>
        <name>ATP</name>
        <dbReference type="ChEBI" id="CHEBI:30616"/>
    </ligand>
</feature>
<keyword id="KW-0030">Aminoacyl-tRNA synthetase</keyword>
<keyword id="KW-0067">ATP-binding</keyword>
<keyword id="KW-0963">Cytoplasm</keyword>
<keyword id="KW-0436">Ligase</keyword>
<keyword id="KW-0479">Metal-binding</keyword>
<keyword id="KW-0547">Nucleotide-binding</keyword>
<keyword id="KW-0648">Protein biosynthesis</keyword>
<keyword id="KW-1185">Reference proteome</keyword>
<keyword id="KW-0862">Zinc</keyword>
<evidence type="ECO:0000250" key="1"/>
<evidence type="ECO:0000305" key="2"/>
<gene>
    <name type="primary">metG</name>
    <name type="ordered locus">CT_032</name>
</gene>
<reference key="1">
    <citation type="journal article" date="1998" name="Science">
        <title>Genome sequence of an obligate intracellular pathogen of humans: Chlamydia trachomatis.</title>
        <authorList>
            <person name="Stephens R.S."/>
            <person name="Kalman S."/>
            <person name="Lammel C.J."/>
            <person name="Fan J."/>
            <person name="Marathe R."/>
            <person name="Aravind L."/>
            <person name="Mitchell W.P."/>
            <person name="Olinger L."/>
            <person name="Tatusov R.L."/>
            <person name="Zhao Q."/>
            <person name="Koonin E.V."/>
            <person name="Davis R.W."/>
        </authorList>
    </citation>
    <scope>NUCLEOTIDE SEQUENCE [LARGE SCALE GENOMIC DNA]</scope>
    <source>
        <strain>ATCC VR-885 / DSM 19411 / UW-3/Cx</strain>
    </source>
</reference>